<dbReference type="EMBL" id="L43967">
    <property type="protein sequence ID" value="AAC71583.2"/>
    <property type="molecule type" value="Genomic_DNA"/>
</dbReference>
<dbReference type="RefSeq" id="WP_010869447.1">
    <property type="nucleotide sequence ID" value="NC_000908.2"/>
</dbReference>
<dbReference type="SMR" id="Q49424"/>
<dbReference type="FunCoup" id="Q49424">
    <property type="interactions" value="114"/>
</dbReference>
<dbReference type="STRING" id="243273.MG_358"/>
<dbReference type="GeneID" id="88282541"/>
<dbReference type="KEGG" id="mge:MG_358"/>
<dbReference type="eggNOG" id="COG0632">
    <property type="taxonomic scope" value="Bacteria"/>
</dbReference>
<dbReference type="HOGENOM" id="CLU_087936_1_1_14"/>
<dbReference type="InParanoid" id="Q49424"/>
<dbReference type="OrthoDB" id="5293449at2"/>
<dbReference type="BioCyc" id="MGEN243273:G1GJ2-451-MONOMER"/>
<dbReference type="Proteomes" id="UP000000807">
    <property type="component" value="Chromosome"/>
</dbReference>
<dbReference type="GO" id="GO:0005737">
    <property type="term" value="C:cytoplasm"/>
    <property type="evidence" value="ECO:0007669"/>
    <property type="project" value="UniProtKB-SubCell"/>
</dbReference>
<dbReference type="GO" id="GO:0009379">
    <property type="term" value="C:Holliday junction helicase complex"/>
    <property type="evidence" value="ECO:0007669"/>
    <property type="project" value="InterPro"/>
</dbReference>
<dbReference type="GO" id="GO:0048476">
    <property type="term" value="C:Holliday junction resolvase complex"/>
    <property type="evidence" value="ECO:0007669"/>
    <property type="project" value="UniProtKB-UniRule"/>
</dbReference>
<dbReference type="GO" id="GO:0005524">
    <property type="term" value="F:ATP binding"/>
    <property type="evidence" value="ECO:0007669"/>
    <property type="project" value="InterPro"/>
</dbReference>
<dbReference type="GO" id="GO:0000400">
    <property type="term" value="F:four-way junction DNA binding"/>
    <property type="evidence" value="ECO:0007669"/>
    <property type="project" value="UniProtKB-UniRule"/>
</dbReference>
<dbReference type="GO" id="GO:0009378">
    <property type="term" value="F:four-way junction helicase activity"/>
    <property type="evidence" value="ECO:0007669"/>
    <property type="project" value="InterPro"/>
</dbReference>
<dbReference type="GO" id="GO:0006310">
    <property type="term" value="P:DNA recombination"/>
    <property type="evidence" value="ECO:0007669"/>
    <property type="project" value="UniProtKB-UniRule"/>
</dbReference>
<dbReference type="GO" id="GO:0006281">
    <property type="term" value="P:DNA repair"/>
    <property type="evidence" value="ECO:0007669"/>
    <property type="project" value="UniProtKB-UniRule"/>
</dbReference>
<dbReference type="CDD" id="cd14332">
    <property type="entry name" value="UBA_RuvA_C"/>
    <property type="match status" value="1"/>
</dbReference>
<dbReference type="Gene3D" id="1.10.150.20">
    <property type="entry name" value="5' to 3' exonuclease, C-terminal subdomain"/>
    <property type="match status" value="1"/>
</dbReference>
<dbReference type="HAMAP" id="MF_00031">
    <property type="entry name" value="DNA_HJ_migration_RuvA"/>
    <property type="match status" value="1"/>
</dbReference>
<dbReference type="InterPro" id="IPR003583">
    <property type="entry name" value="Hlx-hairpin-Hlx_DNA-bd_motif"/>
</dbReference>
<dbReference type="InterPro" id="IPR000085">
    <property type="entry name" value="RuvA"/>
</dbReference>
<dbReference type="InterPro" id="IPR010994">
    <property type="entry name" value="RuvA_2-like"/>
</dbReference>
<dbReference type="InterPro" id="IPR011114">
    <property type="entry name" value="RuvA_C"/>
</dbReference>
<dbReference type="NCBIfam" id="TIGR00084">
    <property type="entry name" value="ruvA"/>
    <property type="match status" value="1"/>
</dbReference>
<dbReference type="PANTHER" id="PTHR38692">
    <property type="entry name" value="PROTEIN SMG"/>
    <property type="match status" value="1"/>
</dbReference>
<dbReference type="PANTHER" id="PTHR38692:SF1">
    <property type="entry name" value="PROTEIN SMG"/>
    <property type="match status" value="1"/>
</dbReference>
<dbReference type="Pfam" id="PF14520">
    <property type="entry name" value="HHH_5"/>
    <property type="match status" value="1"/>
</dbReference>
<dbReference type="Pfam" id="PF07499">
    <property type="entry name" value="RuvA_C"/>
    <property type="match status" value="1"/>
</dbReference>
<dbReference type="SMART" id="SM00278">
    <property type="entry name" value="HhH1"/>
    <property type="match status" value="2"/>
</dbReference>
<dbReference type="SUPFAM" id="SSF47781">
    <property type="entry name" value="RuvA domain 2-like"/>
    <property type="match status" value="1"/>
</dbReference>
<reference key="1">
    <citation type="journal article" date="1995" name="Science">
        <title>The minimal gene complement of Mycoplasma genitalium.</title>
        <authorList>
            <person name="Fraser C.M."/>
            <person name="Gocayne J.D."/>
            <person name="White O."/>
            <person name="Adams M.D."/>
            <person name="Clayton R.A."/>
            <person name="Fleischmann R.D."/>
            <person name="Bult C.J."/>
            <person name="Kerlavage A.R."/>
            <person name="Sutton G.G."/>
            <person name="Kelley J.M."/>
            <person name="Fritchman J.L."/>
            <person name="Weidman J.F."/>
            <person name="Small K.V."/>
            <person name="Sandusky M."/>
            <person name="Fuhrmann J.L."/>
            <person name="Nguyen D.T."/>
            <person name="Utterback T.R."/>
            <person name="Saudek D.M."/>
            <person name="Phillips C.A."/>
            <person name="Merrick J.M."/>
            <person name="Tomb J.-F."/>
            <person name="Dougherty B.A."/>
            <person name="Bott K.F."/>
            <person name="Hu P.-C."/>
            <person name="Lucier T.S."/>
            <person name="Peterson S.N."/>
            <person name="Smith H.O."/>
            <person name="Hutchison C.A. III"/>
            <person name="Venter J.C."/>
        </authorList>
    </citation>
    <scope>NUCLEOTIDE SEQUENCE [LARGE SCALE GENOMIC DNA]</scope>
    <source>
        <strain>ATCC 33530 / DSM 19775 / NCTC 10195 / G37</strain>
    </source>
</reference>
<reference key="2">
    <citation type="journal article" date="2006" name="Proc. Natl. Acad. Sci. U.S.A.">
        <title>Essential genes of a minimal bacterium.</title>
        <authorList>
            <person name="Glass J.I."/>
            <person name="Assad-Garcia N."/>
            <person name="Alperovich N."/>
            <person name="Yooseph S."/>
            <person name="Lewis M.R."/>
            <person name="Maruf M."/>
            <person name="Hutchison C.A. III"/>
            <person name="Smith H.O."/>
            <person name="Venter J.C."/>
        </authorList>
    </citation>
    <scope>SEQUENCE REVISION</scope>
    <scope>DISRUPTION PHENOTYPE</scope>
    <source>
        <strain>ATCC 33530 / DSM 19775 / NCTC 10195 / G37</strain>
    </source>
</reference>
<accession>Q49424</accession>
<comment type="function">
    <text evidence="1">The RuvA-RuvB-RuvC complex processes Holliday junction (HJ) DNA during genetic recombination and DNA repair, while the RuvA-RuvB complex plays an important role in the rescue of blocked DNA replication forks via replication fork reversal (RFR). RuvA specifically binds to HJ cruciform DNA, conferring on it an open structure. The RuvB hexamer acts as an ATP-dependent pump, pulling dsDNA into and through the RuvAB complex. HJ branch migration allows RuvC to scan DNA until it finds its consensus sequence, where it cleaves and resolves the cruciform DNA.</text>
</comment>
<comment type="subunit">
    <text evidence="1">Homotetramer. Forms an RuvA(8)-RuvB(12)-Holliday junction (HJ) complex. HJ DNA is sandwiched between 2 RuvA tetramers; dsDNA enters through RuvA and exits via RuvB. An RuvB hexamer assembles on each DNA strand where it exits the tetramer. Each RuvB hexamer is contacted by two RuvA subunits (via domain III) on 2 adjacent RuvB subunits; this complex drives branch migration. In the full resolvosome a probable DNA-RuvA(4)-RuvB(12)-RuvC(2) complex forms which resolves the HJ.</text>
</comment>
<comment type="subcellular location">
    <subcellularLocation>
        <location evidence="1">Cytoplasm</location>
    </subcellularLocation>
</comment>
<comment type="domain">
    <text evidence="1">Has three domains with a flexible linker between the domains II and III and assumes an 'L' shape. Domain III is highly mobile and contacts RuvB.</text>
</comment>
<comment type="disruption phenotype">
    <text evidence="2">Not essential, it can be deleted.</text>
</comment>
<comment type="similarity">
    <text evidence="1">Belongs to the RuvA family.</text>
</comment>
<feature type="chain" id="PRO_0000094648" description="Holliday junction branch migration complex subunit RuvA">
    <location>
        <begin position="1"/>
        <end position="205"/>
    </location>
</feature>
<feature type="region of interest" description="Domain I" evidence="1">
    <location>
        <begin position="1"/>
        <end position="67"/>
    </location>
</feature>
<feature type="region of interest" description="Domain II" evidence="1">
    <location>
        <begin position="68"/>
        <end position="146"/>
    </location>
</feature>
<feature type="region of interest" description="Flexible linker" evidence="1">
    <location>
        <begin position="147"/>
        <end position="150"/>
    </location>
</feature>
<feature type="region of interest" description="Domain III" evidence="1">
    <location>
        <begin position="150"/>
        <end position="205"/>
    </location>
</feature>
<sequence>MITSIFGKVTFVGKRKIIVEHNWISYWFNTKENHKFEKNLEKNKQIFCHIIKKIVANQIIEEAFAFNTLEEKEWFCRLIELNGIGSKTALNLLNNDLEEIKQYILENNYSALCGINGVNNKIARALLSLEIFEKSENNKNIKGVQVADGYDELFETLKSLGYKQQEIQDALKMIEVKPDFDISQLVAEVIKLMSFKNNEITNKTA</sequence>
<proteinExistence type="inferred from homology"/>
<organism>
    <name type="scientific">Mycoplasma genitalium (strain ATCC 33530 / DSM 19775 / NCTC 10195 / G37)</name>
    <name type="common">Mycoplasmoides genitalium</name>
    <dbReference type="NCBI Taxonomy" id="243273"/>
    <lineage>
        <taxon>Bacteria</taxon>
        <taxon>Bacillati</taxon>
        <taxon>Mycoplasmatota</taxon>
        <taxon>Mycoplasmoidales</taxon>
        <taxon>Mycoplasmoidaceae</taxon>
        <taxon>Mycoplasmoides</taxon>
    </lineage>
</organism>
<gene>
    <name evidence="1" type="primary">ruvA</name>
    <name type="ordered locus">MG358</name>
</gene>
<protein>
    <recommendedName>
        <fullName evidence="1">Holliday junction branch migration complex subunit RuvA</fullName>
    </recommendedName>
</protein>
<keyword id="KW-0963">Cytoplasm</keyword>
<keyword id="KW-0227">DNA damage</keyword>
<keyword id="KW-0233">DNA recombination</keyword>
<keyword id="KW-0234">DNA repair</keyword>
<keyword id="KW-0238">DNA-binding</keyword>
<keyword id="KW-1185">Reference proteome</keyword>
<name>RUVA_MYCGE</name>
<evidence type="ECO:0000255" key="1">
    <source>
        <dbReference type="HAMAP-Rule" id="MF_00031"/>
    </source>
</evidence>
<evidence type="ECO:0000269" key="2">
    <source>
    </source>
</evidence>